<accession>Q15SX5</accession>
<protein>
    <recommendedName>
        <fullName evidence="1">Large ribosomal subunit protein bL35</fullName>
    </recommendedName>
    <alternativeName>
        <fullName evidence="3">50S ribosomal protein L35</fullName>
    </alternativeName>
</protein>
<comment type="similarity">
    <text evidence="1">Belongs to the bacterial ribosomal protein bL35 family.</text>
</comment>
<keyword id="KW-0687">Ribonucleoprotein</keyword>
<keyword id="KW-0689">Ribosomal protein</keyword>
<organism>
    <name type="scientific">Pseudoalteromonas atlantica (strain T6c / ATCC BAA-1087)</name>
    <dbReference type="NCBI Taxonomy" id="3042615"/>
    <lineage>
        <taxon>Bacteria</taxon>
        <taxon>Pseudomonadati</taxon>
        <taxon>Pseudomonadota</taxon>
        <taxon>Gammaproteobacteria</taxon>
        <taxon>Alteromonadales</taxon>
        <taxon>Alteromonadaceae</taxon>
        <taxon>Paraglaciecola</taxon>
    </lineage>
</organism>
<sequence length="65" mass="7582">MPKMKTNRGAAKRFRKTASGRFKSKQSHLRHILTKKSSKRKRHLRGKKLAHVADTALIQRMLPYV</sequence>
<dbReference type="EMBL" id="CP000388">
    <property type="protein sequence ID" value="ABG41013.1"/>
    <property type="molecule type" value="Genomic_DNA"/>
</dbReference>
<dbReference type="RefSeq" id="WP_006991117.1">
    <property type="nucleotide sequence ID" value="NC_008228.1"/>
</dbReference>
<dbReference type="SMR" id="Q15SX5"/>
<dbReference type="STRING" id="342610.Patl_2497"/>
<dbReference type="KEGG" id="pat:Patl_2497"/>
<dbReference type="eggNOG" id="COG0291">
    <property type="taxonomic scope" value="Bacteria"/>
</dbReference>
<dbReference type="HOGENOM" id="CLU_169643_1_1_6"/>
<dbReference type="OrthoDB" id="47476at2"/>
<dbReference type="Proteomes" id="UP000001981">
    <property type="component" value="Chromosome"/>
</dbReference>
<dbReference type="GO" id="GO:0022625">
    <property type="term" value="C:cytosolic large ribosomal subunit"/>
    <property type="evidence" value="ECO:0007669"/>
    <property type="project" value="TreeGrafter"/>
</dbReference>
<dbReference type="GO" id="GO:0003735">
    <property type="term" value="F:structural constituent of ribosome"/>
    <property type="evidence" value="ECO:0007669"/>
    <property type="project" value="InterPro"/>
</dbReference>
<dbReference type="GO" id="GO:0006412">
    <property type="term" value="P:translation"/>
    <property type="evidence" value="ECO:0007669"/>
    <property type="project" value="UniProtKB-UniRule"/>
</dbReference>
<dbReference type="FunFam" id="4.10.410.60:FF:000001">
    <property type="entry name" value="50S ribosomal protein L35"/>
    <property type="match status" value="1"/>
</dbReference>
<dbReference type="Gene3D" id="4.10.410.60">
    <property type="match status" value="1"/>
</dbReference>
<dbReference type="HAMAP" id="MF_00514">
    <property type="entry name" value="Ribosomal_bL35"/>
    <property type="match status" value="1"/>
</dbReference>
<dbReference type="InterPro" id="IPR001706">
    <property type="entry name" value="Ribosomal_bL35"/>
</dbReference>
<dbReference type="InterPro" id="IPR021137">
    <property type="entry name" value="Ribosomal_bL35-like"/>
</dbReference>
<dbReference type="InterPro" id="IPR018265">
    <property type="entry name" value="Ribosomal_bL35_CS"/>
</dbReference>
<dbReference type="InterPro" id="IPR037229">
    <property type="entry name" value="Ribosomal_bL35_sf"/>
</dbReference>
<dbReference type="NCBIfam" id="TIGR00001">
    <property type="entry name" value="rpmI_bact"/>
    <property type="match status" value="1"/>
</dbReference>
<dbReference type="PANTHER" id="PTHR33343">
    <property type="entry name" value="54S RIBOSOMAL PROTEIN BL35M"/>
    <property type="match status" value="1"/>
</dbReference>
<dbReference type="PANTHER" id="PTHR33343:SF1">
    <property type="entry name" value="LARGE RIBOSOMAL SUBUNIT PROTEIN BL35M"/>
    <property type="match status" value="1"/>
</dbReference>
<dbReference type="Pfam" id="PF01632">
    <property type="entry name" value="Ribosomal_L35p"/>
    <property type="match status" value="1"/>
</dbReference>
<dbReference type="PRINTS" id="PR00064">
    <property type="entry name" value="RIBOSOMALL35"/>
</dbReference>
<dbReference type="SUPFAM" id="SSF143034">
    <property type="entry name" value="L35p-like"/>
    <property type="match status" value="1"/>
</dbReference>
<dbReference type="PROSITE" id="PS00936">
    <property type="entry name" value="RIBOSOMAL_L35"/>
    <property type="match status" value="1"/>
</dbReference>
<proteinExistence type="inferred from homology"/>
<evidence type="ECO:0000255" key="1">
    <source>
        <dbReference type="HAMAP-Rule" id="MF_00514"/>
    </source>
</evidence>
<evidence type="ECO:0000256" key="2">
    <source>
        <dbReference type="SAM" id="MobiDB-lite"/>
    </source>
</evidence>
<evidence type="ECO:0000305" key="3"/>
<reference key="1">
    <citation type="submission" date="2006-06" db="EMBL/GenBank/DDBJ databases">
        <title>Complete sequence of Pseudoalteromonas atlantica T6c.</title>
        <authorList>
            <consortium name="US DOE Joint Genome Institute"/>
            <person name="Copeland A."/>
            <person name="Lucas S."/>
            <person name="Lapidus A."/>
            <person name="Barry K."/>
            <person name="Detter J.C."/>
            <person name="Glavina del Rio T."/>
            <person name="Hammon N."/>
            <person name="Israni S."/>
            <person name="Dalin E."/>
            <person name="Tice H."/>
            <person name="Pitluck S."/>
            <person name="Saunders E."/>
            <person name="Brettin T."/>
            <person name="Bruce D."/>
            <person name="Han C."/>
            <person name="Tapia R."/>
            <person name="Gilna P."/>
            <person name="Schmutz J."/>
            <person name="Larimer F."/>
            <person name="Land M."/>
            <person name="Hauser L."/>
            <person name="Kyrpides N."/>
            <person name="Kim E."/>
            <person name="Karls A.C."/>
            <person name="Bartlett D."/>
            <person name="Higgins B.P."/>
            <person name="Richardson P."/>
        </authorList>
    </citation>
    <scope>NUCLEOTIDE SEQUENCE [LARGE SCALE GENOMIC DNA]</scope>
    <source>
        <strain>T6c / ATCC BAA-1087</strain>
    </source>
</reference>
<feature type="chain" id="PRO_1000050743" description="Large ribosomal subunit protein bL35">
    <location>
        <begin position="1"/>
        <end position="65"/>
    </location>
</feature>
<feature type="region of interest" description="Disordered" evidence="2">
    <location>
        <begin position="1"/>
        <end position="30"/>
    </location>
</feature>
<feature type="compositionally biased region" description="Basic residues" evidence="2">
    <location>
        <begin position="10"/>
        <end position="30"/>
    </location>
</feature>
<name>RL35_PSEA6</name>
<gene>
    <name evidence="1" type="primary">rpmI</name>
    <name type="ordered locus">Patl_2497</name>
</gene>